<comment type="similarity">
    <text evidence="2">Belongs to the snRNP Sm proteins family.</text>
</comment>
<dbReference type="EMBL" id="BA000002">
    <property type="protein sequence ID" value="BAA79491.1"/>
    <property type="molecule type" value="Genomic_DNA"/>
</dbReference>
<dbReference type="PIR" id="G72749">
    <property type="entry name" value="G72749"/>
</dbReference>
<dbReference type="RefSeq" id="WP_010865811.1">
    <property type="nucleotide sequence ID" value="NC_000854.2"/>
</dbReference>
<dbReference type="SMR" id="Q9YEQ5"/>
<dbReference type="STRING" id="272557.APE_0525a"/>
<dbReference type="EnsemblBacteria" id="BAA79491">
    <property type="protein sequence ID" value="BAA79491"/>
    <property type="gene ID" value="APE_0525a"/>
</dbReference>
<dbReference type="GeneID" id="1444699"/>
<dbReference type="KEGG" id="ape:APE_0525a"/>
<dbReference type="eggNOG" id="arCOG00998">
    <property type="taxonomic scope" value="Archaea"/>
</dbReference>
<dbReference type="Proteomes" id="UP000002518">
    <property type="component" value="Chromosome"/>
</dbReference>
<dbReference type="GO" id="GO:1990904">
    <property type="term" value="C:ribonucleoprotein complex"/>
    <property type="evidence" value="ECO:0007669"/>
    <property type="project" value="UniProtKB-KW"/>
</dbReference>
<dbReference type="GO" id="GO:0003723">
    <property type="term" value="F:RNA binding"/>
    <property type="evidence" value="ECO:0007669"/>
    <property type="project" value="InterPro"/>
</dbReference>
<dbReference type="CDD" id="cd01731">
    <property type="entry name" value="archaeal_Sm1"/>
    <property type="match status" value="1"/>
</dbReference>
<dbReference type="Gene3D" id="2.30.30.100">
    <property type="match status" value="1"/>
</dbReference>
<dbReference type="HAMAP" id="MF_00257">
    <property type="entry name" value="Lsm_RuxX"/>
    <property type="match status" value="1"/>
</dbReference>
<dbReference type="InterPro" id="IPR044641">
    <property type="entry name" value="Lsm7/SmG-like"/>
</dbReference>
<dbReference type="InterPro" id="IPR010920">
    <property type="entry name" value="LSM_dom_sf"/>
</dbReference>
<dbReference type="InterPro" id="IPR047575">
    <property type="entry name" value="Sm"/>
</dbReference>
<dbReference type="InterPro" id="IPR001163">
    <property type="entry name" value="Sm_dom_euk/arc"/>
</dbReference>
<dbReference type="InterPro" id="IPR022901">
    <property type="entry name" value="snRNP_Sm-like_arc"/>
</dbReference>
<dbReference type="PANTHER" id="PTHR10553">
    <property type="entry name" value="SMALL NUCLEAR RIBONUCLEOPROTEIN"/>
    <property type="match status" value="1"/>
</dbReference>
<dbReference type="PANTHER" id="PTHR10553:SF5">
    <property type="entry name" value="U6 SNRNA-ASSOCIATED SM-LIKE PROTEIN LSM7"/>
    <property type="match status" value="1"/>
</dbReference>
<dbReference type="Pfam" id="PF01423">
    <property type="entry name" value="LSM"/>
    <property type="match status" value="1"/>
</dbReference>
<dbReference type="SMART" id="SM00651">
    <property type="entry name" value="Sm"/>
    <property type="match status" value="1"/>
</dbReference>
<dbReference type="SUPFAM" id="SSF50182">
    <property type="entry name" value="Sm-like ribonucleoproteins"/>
    <property type="match status" value="1"/>
</dbReference>
<dbReference type="PROSITE" id="PS52002">
    <property type="entry name" value="SM"/>
    <property type="match status" value="1"/>
</dbReference>
<protein>
    <recommendedName>
        <fullName>Putative snRNP Sm-like protein</fullName>
    </recommendedName>
</protein>
<accession>Q9YEQ5</accession>
<evidence type="ECO:0000255" key="1">
    <source>
        <dbReference type="PROSITE-ProRule" id="PRU01346"/>
    </source>
</evidence>
<evidence type="ECO:0000305" key="2"/>
<name>RUXX_AERPE</name>
<feature type="chain" id="PRO_0000125591" description="Putative snRNP Sm-like protein">
    <location>
        <begin position="1"/>
        <end position="77"/>
    </location>
</feature>
<feature type="domain" description="Sm" evidence="1">
    <location>
        <begin position="8"/>
        <end position="77"/>
    </location>
</feature>
<gene>
    <name type="ordered locus">APE_0525a</name>
    <name type="ORF">APES022</name>
</gene>
<sequence length="77" mass="8374">MSGPITLPTLRMMLDYVDTPVLVKLKSGLRIKGVLKTYDQHLNIILGDAEEIGETSIRRLGLTLVRGDSVVVITPAA</sequence>
<keyword id="KW-1185">Reference proteome</keyword>
<keyword id="KW-0687">Ribonucleoprotein</keyword>
<proteinExistence type="inferred from homology"/>
<organism>
    <name type="scientific">Aeropyrum pernix (strain ATCC 700893 / DSM 11879 / JCM 9820 / NBRC 100138 / K1)</name>
    <dbReference type="NCBI Taxonomy" id="272557"/>
    <lineage>
        <taxon>Archaea</taxon>
        <taxon>Thermoproteota</taxon>
        <taxon>Thermoprotei</taxon>
        <taxon>Desulfurococcales</taxon>
        <taxon>Desulfurococcaceae</taxon>
        <taxon>Aeropyrum</taxon>
    </lineage>
</organism>
<reference key="1">
    <citation type="journal article" date="1999" name="DNA Res.">
        <title>Complete genome sequence of an aerobic hyper-thermophilic crenarchaeon, Aeropyrum pernix K1.</title>
        <authorList>
            <person name="Kawarabayasi Y."/>
            <person name="Hino Y."/>
            <person name="Horikawa H."/>
            <person name="Yamazaki S."/>
            <person name="Haikawa Y."/>
            <person name="Jin-no K."/>
            <person name="Takahashi M."/>
            <person name="Sekine M."/>
            <person name="Baba S."/>
            <person name="Ankai A."/>
            <person name="Kosugi H."/>
            <person name="Hosoyama A."/>
            <person name="Fukui S."/>
            <person name="Nagai Y."/>
            <person name="Nishijima K."/>
            <person name="Nakazawa H."/>
            <person name="Takamiya M."/>
            <person name="Masuda S."/>
            <person name="Funahashi T."/>
            <person name="Tanaka T."/>
            <person name="Kudoh Y."/>
            <person name="Yamazaki J."/>
            <person name="Kushida N."/>
            <person name="Oguchi A."/>
            <person name="Aoki K."/>
            <person name="Kubota K."/>
            <person name="Nakamura Y."/>
            <person name="Nomura N."/>
            <person name="Sako Y."/>
            <person name="Kikuchi H."/>
        </authorList>
    </citation>
    <scope>NUCLEOTIDE SEQUENCE [LARGE SCALE GENOMIC DNA]</scope>
    <source>
        <strain>ATCC 700893 / DSM 11879 / JCM 9820 / NBRC 100138 / K1</strain>
    </source>
</reference>